<proteinExistence type="evidence at protein level"/>
<name>BIR1B_MOUSE</name>
<keyword id="KW-0053">Apoptosis</keyword>
<keyword id="KW-0067">ATP-binding</keyword>
<keyword id="KW-0391">Immunity</keyword>
<keyword id="KW-0395">Inflammatory response</keyword>
<keyword id="KW-0399">Innate immunity</keyword>
<keyword id="KW-0479">Metal-binding</keyword>
<keyword id="KW-0547">Nucleotide-binding</keyword>
<keyword id="KW-1185">Reference proteome</keyword>
<keyword id="KW-0677">Repeat</keyword>
<keyword id="KW-0862">Zinc</keyword>
<organism>
    <name type="scientific">Mus musculus</name>
    <name type="common">Mouse</name>
    <dbReference type="NCBI Taxonomy" id="10090"/>
    <lineage>
        <taxon>Eukaryota</taxon>
        <taxon>Metazoa</taxon>
        <taxon>Chordata</taxon>
        <taxon>Craniata</taxon>
        <taxon>Vertebrata</taxon>
        <taxon>Euteleostomi</taxon>
        <taxon>Mammalia</taxon>
        <taxon>Eutheria</taxon>
        <taxon>Euarchontoglires</taxon>
        <taxon>Glires</taxon>
        <taxon>Rodentia</taxon>
        <taxon>Myomorpha</taxon>
        <taxon>Muroidea</taxon>
        <taxon>Muridae</taxon>
        <taxon>Murinae</taxon>
        <taxon>Mus</taxon>
        <taxon>Mus</taxon>
    </lineage>
</organism>
<evidence type="ECO:0000250" key="1"/>
<evidence type="ECO:0000255" key="2">
    <source>
        <dbReference type="PROSITE-ProRule" id="PRU00029"/>
    </source>
</evidence>
<evidence type="ECO:0000255" key="3">
    <source>
        <dbReference type="PROSITE-ProRule" id="PRU00136"/>
    </source>
</evidence>
<evidence type="ECO:0000269" key="4">
    <source>
    </source>
</evidence>
<evidence type="ECO:0000269" key="5">
    <source>
    </source>
</evidence>
<evidence type="ECO:0000305" key="6"/>
<accession>Q9QUK4</accession>
<accession>A9C470</accession>
<accession>O09124</accession>
<accession>Q9R030</accession>
<sequence>MAAQGEAVEEIICEFDDDLVSELSTLLRVDALSVLKRQQEEDHKTRMKMKKGFNSQMRSEAKRLKTFETYDKFRSWTPQEMAAAGFYHTGVKLGVQCFCCSLILFSTRLRKLPIENHKKLRPECEFLLGKDVGNIGKYDIRVKSPEKMLRGDKARYHEEEARLESFEDWPFYAHGTSPRVLSAAGFVFTGKRDTVQCFSCGGCLGNWEEGDDPWKEHAKWFPKCEFLQSKKSPEEITQYVQSYEGFLHVTGEHFVNSWVRRELPMVSAYCNDSVFANEELRMDTFKDWPHESPGAVEALVKAGLFYTGKRDIVQCFSCGGCMEKWAEGDNPIEDHTKFFPNCVFLQTLKSSAEVIPALQSHCALPEAMETTSESNHDDAAAVHSTVVDVSPSEAQELEPASSLVSVLCRDQDHSEAQGRGCASSGTYLPSTDLGQSEAQWLQEARSLSEQLRDTYTKATFRHMNLPEVYSSLGTDHLLSCDVSIISKHISQPVQGSLTIPEVFSNLNSVMCVEGEAGSGKTTFLKRIAFLWASGCCPLLYRFQLVFYLSLSSITPGQELAKIICAQLLGAGGCISEVCLSSIIQQLQHQVLFLLDDYSGLASLPQALHTLITKNYLSRTCLLIAVHTNKVRGIRPYLDTSLEIKEFPFYNTVSVLRKLFSHDIMRVRKFINYFGFHEELQGIHKTPLFVAAVCTDWFKNPSDQPFQDVALFKAYMQYLSLKHKGAAKPLQATVSSCGQLALTGLFSSCFEFNSDNLAEAGVDEDEELTTCLMSKFTAQRLRPVYRFLGPLFQEFLAAVRLTELLSSDRQEDQDLGLYYLRQINSPLKAMSIYHTFLKYVSSHPSSKAAPTVVSHLLQLVDEKESLENMSENEDYMKLHPEALLWIECLRGLWQLSPESFSLFISENLLRICLNFAHESNTVAACSPVILQFLRGRTLDLKVLSLQYFWDHPETLLLLKSIKISLNGNNWVQRIDFSLIEKSFEKVQPPTIDQDYAIAFQPINEVQKNLSEKKHIIKKYEDMKHQIPLNISTGYWKLSPKPYKIPKLEVQVTNTGPADQALLQVLMEVFSASQSIEFRLSDSSGFLESIRPALELSKASVTKCSMSRLELSREDQKLLLTLPTLQSLEVSETNQLPDQLFHNLHKFLGLKELCVRLDSKPDVLSVLPGEFPNLHHMEKLSIRTSTESDLSKLVKLIQNSPNLHVFHLKCNFLSNCEPLMTVLASCKKLREIEFSGRCFEAMTFVNILPNFVFLKILNLRDQQFPDKETSEKFAQALGSLRNLEKLFVPTGDGIHQVAKLIVRQCLQLPCLRVLVFAETLDDDSVLEIAKGATRGGFQKLENLDLTLNHKITEEGYRNFFQVLDNLPNLKNLDISRHIPECIQIQAITVKALGQCVSRLPSLTRLGMLSWLLDEEDIKVINDVKERHPQSKRLTVHWRWVVPFSPVIQK</sequence>
<reference key="1">
    <citation type="journal article" date="1999" name="Mamm. Genome">
        <title>The mouse Naip gene cluster on chromosome 13 encodes several distinct functional transcripts.</title>
        <authorList>
            <person name="Huang S."/>
            <person name="Scharf J.M."/>
            <person name="Growney J.D."/>
            <person name="Endrizzi M.G."/>
            <person name="Dietrich W.F."/>
        </authorList>
    </citation>
    <scope>NUCLEOTIDE SEQUENCE [MRNA]</scope>
</reference>
<reference key="2">
    <citation type="journal article" date="1999" name="Mamm. Genome">
        <title>cDNA cloning and the 5'genomic organization of Naip2, a candidate gene for murine Legionella resistance.</title>
        <authorList>
            <person name="Yaraghi Z."/>
            <person name="Diez E."/>
            <person name="Gros P."/>
            <person name="MacKenzie A."/>
        </authorList>
    </citation>
    <scope>NUCLEOTIDE SEQUENCE [MRNA]</scope>
</reference>
<reference key="3">
    <citation type="journal article" date="1999" name="Genomics">
        <title>Comparative sequence analysis of the mouse and human Lgn1/SMA interval.</title>
        <authorList>
            <person name="Endrizzi M."/>
            <person name="Huang S."/>
            <person name="Scharf J.M."/>
            <person name="Kelter A.R."/>
            <person name="Wirth B."/>
            <person name="Kunkel L.M."/>
            <person name="Miller W."/>
            <person name="Dietrich W.F."/>
        </authorList>
    </citation>
    <scope>NUCLEOTIDE SEQUENCE [GENOMIC DNA]</scope>
    <source>
        <strain>129/Sv</strain>
    </source>
</reference>
<reference key="4">
    <citation type="journal article" date="2009" name="PLoS Biol.">
        <title>Lineage-specific biology revealed by a finished genome assembly of the mouse.</title>
        <authorList>
            <person name="Church D.M."/>
            <person name="Goodstadt L."/>
            <person name="Hillier L.W."/>
            <person name="Zody M.C."/>
            <person name="Goldstein S."/>
            <person name="She X."/>
            <person name="Bult C.J."/>
            <person name="Agarwala R."/>
            <person name="Cherry J.L."/>
            <person name="DiCuccio M."/>
            <person name="Hlavina W."/>
            <person name="Kapustin Y."/>
            <person name="Meric P."/>
            <person name="Maglott D."/>
            <person name="Birtle Z."/>
            <person name="Marques A.C."/>
            <person name="Graves T."/>
            <person name="Zhou S."/>
            <person name="Teague B."/>
            <person name="Potamousis K."/>
            <person name="Churas C."/>
            <person name="Place M."/>
            <person name="Herschleb J."/>
            <person name="Runnheim R."/>
            <person name="Forrest D."/>
            <person name="Amos-Landgraf J."/>
            <person name="Schwartz D.C."/>
            <person name="Cheng Z."/>
            <person name="Lindblad-Toh K."/>
            <person name="Eichler E.E."/>
            <person name="Ponting C.P."/>
        </authorList>
    </citation>
    <scope>NUCLEOTIDE SEQUENCE [LARGE SCALE GENOMIC DNA]</scope>
    <source>
        <strain>C57BL/6J</strain>
    </source>
</reference>
<reference key="5">
    <citation type="journal article" date="1996" name="Genomics">
        <title>The mouse region syntenic for human spinal muscular atrophy lies within the Lgn1 critical interval and contains multiple copies of Naip exon 5.</title>
        <authorList>
            <person name="Scharf J.M."/>
            <person name="Damron D."/>
            <person name="Frisella A."/>
            <person name="Bruno S."/>
            <person name="Beggs A.H."/>
            <person name="Kunkel L.M."/>
            <person name="Dietrich W.F."/>
        </authorList>
    </citation>
    <scope>NUCLEOTIDE SEQUENCE [GENOMIC DNA] OF 82-168</scope>
    <source>
        <strain>129/SvJ</strain>
    </source>
</reference>
<reference key="6">
    <citation type="journal article" date="2010" name="Cell">
        <title>A tissue-specific atlas of mouse protein phosphorylation and expression.</title>
        <authorList>
            <person name="Huttlin E.L."/>
            <person name="Jedrychowski M.P."/>
            <person name="Elias J.E."/>
            <person name="Goswami T."/>
            <person name="Rad R."/>
            <person name="Beausoleil S.A."/>
            <person name="Villen J."/>
            <person name="Haas W."/>
            <person name="Sowa M.E."/>
            <person name="Gygi S.P."/>
        </authorList>
    </citation>
    <scope>IDENTIFICATION BY MASS SPECTROMETRY [LARGE SCALE ANALYSIS]</scope>
    <source>
        <tissue>Spleen</tissue>
    </source>
</reference>
<reference key="7">
    <citation type="journal article" date="2011" name="Nature">
        <title>Innate immune recognition of bacterial ligands by NAIPs determines inflammasome specificity.</title>
        <authorList>
            <person name="Kofoed E.M."/>
            <person name="Vance R.E."/>
        </authorList>
    </citation>
    <scope>FUNCTION</scope>
    <scope>INTERACTION WITH S.TYPHIMURIUM PRGJ</scope>
</reference>
<reference key="8">
    <citation type="journal article" date="2011" name="Nature">
        <title>The NLRC4 inflammasome receptors for bacterial flagellin and type III secretion apparatus.</title>
        <authorList>
            <person name="Zhao Y."/>
            <person name="Yang J."/>
            <person name="Shi J."/>
            <person name="Gong Y.N."/>
            <person name="Lu Q."/>
            <person name="Xu H."/>
            <person name="Liu L."/>
            <person name="Shao F."/>
        </authorList>
    </citation>
    <scope>FUNCTION</scope>
    <scope>INTERACTION WITH S.TYPHIMURIUM PRGJ AND B.THAILANDENSIS BSAK</scope>
</reference>
<protein>
    <recommendedName>
        <fullName>Baculoviral IAP repeat-containing protein 1b</fullName>
    </recommendedName>
    <alternativeName>
        <fullName>Neuronal apoptosis inhibitory protein 2</fullName>
    </alternativeName>
</protein>
<comment type="function">
    <text evidence="4 5">Sensor component of the NLRC4 inflammasome that specifically recognizes and binds type III secretion system (T3SS) rod proteins such as S.typhimurium (Salmonella) PrgJ and B.thailandensis BsaK from pathogenic bacteria. Association of pathogenic bacteria proteins drives in turn drive assembly and activation of the NLRC4 inflammasome, promoting caspase-1 activation, cytokine production and macrophage pyroptosis. The NLRC4 inflammasome is activated as part of the innate immune response to a range of intracellular bacteria. The NLRC4 inflammasome senses Gram-negative bacteria such as L.pneumophila and P.aeruginosa, enteric pathogens S.typhimurium (Salmonella) and S.flexneri. Prevents motor-neuron apoptosis induced by a variety of signals.</text>
</comment>
<comment type="subunit">
    <text evidence="4 5">Component of the NLRC4 inflammasome, at least composed of NLRC4, caspase-1 (CASP1) and some NAIP protein. Interacts with S.typhimurium (Salmonella) PrgJ and B.thailandensis BsaK.</text>
</comment>
<comment type="interaction">
    <interactant intactId="EBI-15944068">
        <id>Q9QUK4</id>
    </interactant>
    <interactant intactId="EBI-15944060">
        <id>Q2T728</id>
        <label>BTH_II0824</label>
    </interactant>
    <organismsDiffer>true</organismsDiffer>
    <experiments>2</experiments>
</comment>
<gene>
    <name type="primary">Naip2</name>
    <name type="synonym">Birc1b</name>
    <name type="synonym">Naip-rs6</name>
</gene>
<feature type="chain" id="PRO_0000122343" description="Baculoviral IAP repeat-containing protein 1b">
    <location>
        <begin position="1"/>
        <end position="1447"/>
    </location>
</feature>
<feature type="repeat" description="BIR 1">
    <location>
        <begin position="60"/>
        <end position="127"/>
    </location>
</feature>
<feature type="repeat" description="BIR 2">
    <location>
        <begin position="159"/>
        <end position="227"/>
    </location>
</feature>
<feature type="repeat" description="BIR 3">
    <location>
        <begin position="278"/>
        <end position="345"/>
    </location>
</feature>
<feature type="domain" description="NACHT" evidence="3">
    <location>
        <begin position="508"/>
        <end position="802"/>
    </location>
</feature>
<feature type="binding site" evidence="2">
    <location>
        <position position="315"/>
    </location>
    <ligand>
        <name>Zn(2+)</name>
        <dbReference type="ChEBI" id="CHEBI:29105"/>
    </ligand>
</feature>
<feature type="binding site" evidence="2">
    <location>
        <position position="318"/>
    </location>
    <ligand>
        <name>Zn(2+)</name>
        <dbReference type="ChEBI" id="CHEBI:29105"/>
    </ligand>
</feature>
<feature type="binding site" evidence="2">
    <location>
        <position position="335"/>
    </location>
    <ligand>
        <name>Zn(2+)</name>
        <dbReference type="ChEBI" id="CHEBI:29105"/>
    </ligand>
</feature>
<feature type="binding site" evidence="2">
    <location>
        <position position="342"/>
    </location>
    <ligand>
        <name>Zn(2+)</name>
        <dbReference type="ChEBI" id="CHEBI:29105"/>
    </ligand>
</feature>
<feature type="binding site" evidence="1">
    <location>
        <position position="520"/>
    </location>
    <ligand>
        <name>ATP</name>
        <dbReference type="ChEBI" id="CHEBI:30616"/>
    </ligand>
</feature>
<feature type="sequence conflict" description="In Ref. 3; AAD56759." evidence="6" ref="3">
    <original>D</original>
    <variation>G</variation>
    <location>
        <position position="377"/>
    </location>
</feature>
<feature type="sequence conflict" description="In Ref. 3; AAD56759." evidence="6" ref="3">
    <original>L</original>
    <variation>F</variation>
    <location>
        <position position="403"/>
    </location>
</feature>
<feature type="sequence conflict" description="In Ref. 3; AAD56759." evidence="6" ref="3">
    <original>L</original>
    <variation>I</variation>
    <location>
        <position position="478"/>
    </location>
</feature>
<feature type="sequence conflict" description="In Ref. 1; AAD56761/AAD56762 and 2; AAC73002." evidence="6" ref="1 2">
    <original>Y</original>
    <variation>N</variation>
    <location>
        <position position="540"/>
    </location>
</feature>
<feature type="sequence conflict" description="In Ref. 3; AAD56759." evidence="6" ref="3">
    <original>K</original>
    <variation>N</variation>
    <location>
        <position position="862"/>
    </location>
</feature>
<feature type="sequence conflict" description="In Ref. 3; AAD56759." evidence="6" ref="3">
    <original>SD</original>
    <variation>FN</variation>
    <location>
        <begin position="1079"/>
        <end position="1080"/>
    </location>
</feature>
<feature type="sequence conflict" description="In Ref. 3; AAD56759." evidence="6" ref="3">
    <original>R</original>
    <variation>C</variation>
    <location>
        <position position="1089"/>
    </location>
</feature>
<feature type="sequence conflict" description="In Ref. 3; AAD56759." evidence="6" ref="3">
    <original>K</original>
    <variation>E</variation>
    <location>
        <position position="1115"/>
    </location>
</feature>
<feature type="sequence conflict" description="In Ref. 3; AAD56759." evidence="6" ref="3">
    <original>T</original>
    <variation>A</variation>
    <location>
        <position position="1122"/>
    </location>
</feature>
<feature type="sequence conflict" description="In Ref. 3; AAD56759." evidence="6" ref="3">
    <original>D</original>
    <variation>E</variation>
    <location>
        <position position="1136"/>
    </location>
</feature>
<feature type="sequence conflict" description="In Ref. 3; AAD56759." evidence="6" ref="3">
    <original>S</original>
    <variation>G</variation>
    <location>
        <position position="1157"/>
    </location>
</feature>
<feature type="sequence conflict" description="In Ref. 3; AAD56759." evidence="6" ref="3">
    <original>G</original>
    <variation>R</variation>
    <location>
        <position position="1167"/>
    </location>
</feature>
<feature type="sequence conflict" description="In Ref. 3; AAD56759." evidence="6" ref="3">
    <original>F</original>
    <variation>C</variation>
    <location>
        <position position="1271"/>
    </location>
</feature>
<dbReference type="EMBL" id="AF135489">
    <property type="protein sequence ID" value="AAD56761.1"/>
    <property type="molecule type" value="mRNA"/>
</dbReference>
<dbReference type="EMBL" id="AF135490">
    <property type="protein sequence ID" value="AAD56762.1"/>
    <property type="molecule type" value="mRNA"/>
</dbReference>
<dbReference type="EMBL" id="AF102871">
    <property type="protein sequence ID" value="AAC73002.1"/>
    <property type="molecule type" value="mRNA"/>
</dbReference>
<dbReference type="EMBL" id="AF131205">
    <property type="protein sequence ID" value="AAD56759.1"/>
    <property type="molecule type" value="Genomic_DNA"/>
</dbReference>
<dbReference type="EMBL" id="CT030167">
    <property type="status" value="NOT_ANNOTATED_CDS"/>
    <property type="molecule type" value="Genomic_DNA"/>
</dbReference>
<dbReference type="EMBL" id="U66329">
    <property type="protein sequence ID" value="AAC52977.1"/>
    <property type="molecule type" value="Genomic_DNA"/>
</dbReference>
<dbReference type="CCDS" id="CCDS26726.1"/>
<dbReference type="PIR" id="T42628">
    <property type="entry name" value="T42628"/>
</dbReference>
<dbReference type="RefSeq" id="NP_001119654.1">
    <property type="nucleotide sequence ID" value="NM_001126182.2"/>
</dbReference>
<dbReference type="RefSeq" id="NP_035002.2">
    <property type="nucleotide sequence ID" value="NM_010872.3"/>
</dbReference>
<dbReference type="EMDB" id="EMD-24389"/>
<dbReference type="SMR" id="Q9QUK4"/>
<dbReference type="BioGRID" id="201686">
    <property type="interactions" value="1"/>
</dbReference>
<dbReference type="DIP" id="DIP-59160N"/>
<dbReference type="FunCoup" id="Q9QUK4">
    <property type="interactions" value="22"/>
</dbReference>
<dbReference type="IntAct" id="Q9QUK4">
    <property type="interactions" value="4"/>
</dbReference>
<dbReference type="STRING" id="10090.ENSMUSP00000113890"/>
<dbReference type="MEROPS" id="I32.001"/>
<dbReference type="GlyGen" id="Q9QUK4">
    <property type="glycosylation" value="1 site, 1 O-linked glycan (1 site)"/>
</dbReference>
<dbReference type="iPTMnet" id="Q9QUK4"/>
<dbReference type="PhosphoSitePlus" id="Q9QUK4"/>
<dbReference type="PaxDb" id="10090-ENSMUSP00000113890"/>
<dbReference type="ProteomicsDB" id="273616"/>
<dbReference type="Pumba" id="Q9QUK4"/>
<dbReference type="DNASU" id="17948"/>
<dbReference type="Ensembl" id="ENSMUST00000067975.12">
    <property type="protein sequence ID" value="ENSMUSP00000070827.6"/>
    <property type="gene ID" value="ENSMUSG00000078945.11"/>
</dbReference>
<dbReference type="Ensembl" id="ENSMUST00000117913.8">
    <property type="protein sequence ID" value="ENSMUSP00000113890.2"/>
    <property type="gene ID" value="ENSMUSG00000078945.11"/>
</dbReference>
<dbReference type="GeneID" id="17948"/>
<dbReference type="KEGG" id="mmu:17948"/>
<dbReference type="UCSC" id="uc007rqj.2">
    <property type="organism name" value="mouse"/>
</dbReference>
<dbReference type="AGR" id="MGI:1298226"/>
<dbReference type="CTD" id="17948"/>
<dbReference type="MGI" id="MGI:1298226">
    <property type="gene designation" value="Naip2"/>
</dbReference>
<dbReference type="VEuPathDB" id="HostDB:ENSMUSG00000078945"/>
<dbReference type="eggNOG" id="KOG1101">
    <property type="taxonomic scope" value="Eukaryota"/>
</dbReference>
<dbReference type="GeneTree" id="ENSGT00940000163369"/>
<dbReference type="InParanoid" id="Q9QUK4"/>
<dbReference type="OMA" id="TFHCENT"/>
<dbReference type="OrthoDB" id="4034597at2759"/>
<dbReference type="PhylomeDB" id="Q9QUK4"/>
<dbReference type="TreeFam" id="TF105356"/>
<dbReference type="BioGRID-ORCS" id="17948">
    <property type="hits" value="3 hits in 76 CRISPR screens"/>
</dbReference>
<dbReference type="PRO" id="PR:Q9QUK4"/>
<dbReference type="Proteomes" id="UP000000589">
    <property type="component" value="Chromosome 13"/>
</dbReference>
<dbReference type="RNAct" id="Q9QUK4">
    <property type="molecule type" value="protein"/>
</dbReference>
<dbReference type="Bgee" id="ENSMUSG00000078945">
    <property type="expression patterns" value="Expressed in granulocyte and 98 other cell types or tissues"/>
</dbReference>
<dbReference type="ExpressionAtlas" id="Q9QUK4">
    <property type="expression patterns" value="baseline and differential"/>
</dbReference>
<dbReference type="GO" id="GO:0072557">
    <property type="term" value="C:IPAF inflammasome complex"/>
    <property type="evidence" value="ECO:0000314"/>
    <property type="project" value="UniProtKB"/>
</dbReference>
<dbReference type="GO" id="GO:0005524">
    <property type="term" value="F:ATP binding"/>
    <property type="evidence" value="ECO:0000250"/>
    <property type="project" value="UniProtKB"/>
</dbReference>
<dbReference type="GO" id="GO:0043027">
    <property type="term" value="F:cysteine-type endopeptidase inhibitor activity involved in apoptotic process"/>
    <property type="evidence" value="ECO:0007669"/>
    <property type="project" value="InterPro"/>
</dbReference>
<dbReference type="GO" id="GO:0046872">
    <property type="term" value="F:metal ion binding"/>
    <property type="evidence" value="ECO:0007669"/>
    <property type="project" value="UniProtKB-KW"/>
</dbReference>
<dbReference type="GO" id="GO:0006915">
    <property type="term" value="P:apoptotic process"/>
    <property type="evidence" value="ECO:0007669"/>
    <property type="project" value="UniProtKB-KW"/>
</dbReference>
<dbReference type="GO" id="GO:0071391">
    <property type="term" value="P:cellular response to estrogen stimulus"/>
    <property type="evidence" value="ECO:0000314"/>
    <property type="project" value="MGI"/>
</dbReference>
<dbReference type="GO" id="GO:0042742">
    <property type="term" value="P:defense response to bacterium"/>
    <property type="evidence" value="ECO:0000315"/>
    <property type="project" value="UniProtKB"/>
</dbReference>
<dbReference type="GO" id="GO:0016045">
    <property type="term" value="P:detection of bacterium"/>
    <property type="evidence" value="ECO:0000315"/>
    <property type="project" value="UniProtKB"/>
</dbReference>
<dbReference type="GO" id="GO:0006954">
    <property type="term" value="P:inflammatory response"/>
    <property type="evidence" value="ECO:0000315"/>
    <property type="project" value="UniProtKB"/>
</dbReference>
<dbReference type="GO" id="GO:0045087">
    <property type="term" value="P:innate immune response"/>
    <property type="evidence" value="ECO:0007669"/>
    <property type="project" value="UniProtKB-KW"/>
</dbReference>
<dbReference type="GO" id="GO:0043066">
    <property type="term" value="P:negative regulation of apoptotic process"/>
    <property type="evidence" value="ECO:0007669"/>
    <property type="project" value="InterPro"/>
</dbReference>
<dbReference type="GO" id="GO:0070269">
    <property type="term" value="P:pyroptotic inflammatory response"/>
    <property type="evidence" value="ECO:0000315"/>
    <property type="project" value="UniProtKB"/>
</dbReference>
<dbReference type="CDD" id="cd00022">
    <property type="entry name" value="BIR"/>
    <property type="match status" value="3"/>
</dbReference>
<dbReference type="FunFam" id="1.10.1170.10:FF:000007">
    <property type="entry name" value="Baculoviral IAP repeat-containing protein 1"/>
    <property type="match status" value="2"/>
</dbReference>
<dbReference type="FunFam" id="1.10.1170.10:FF:000013">
    <property type="entry name" value="Baculoviral IAP repeat-containing protein 1"/>
    <property type="match status" value="1"/>
</dbReference>
<dbReference type="FunFam" id="3.40.50.300:FF:001126">
    <property type="entry name" value="Baculoviral IAP repeat-containing protein 1"/>
    <property type="match status" value="1"/>
</dbReference>
<dbReference type="FunFam" id="3.80.10.10:FF:000316">
    <property type="entry name" value="Baculoviral IAP repeat-containing protein 1"/>
    <property type="match status" value="1"/>
</dbReference>
<dbReference type="Gene3D" id="1.10.1170.10">
    <property type="entry name" value="Inhibitor Of Apoptosis Protein (2mihbC-IAP-1), Chain A"/>
    <property type="match status" value="3"/>
</dbReference>
<dbReference type="Gene3D" id="3.40.50.300">
    <property type="entry name" value="P-loop containing nucleotide triphosphate hydrolases"/>
    <property type="match status" value="1"/>
</dbReference>
<dbReference type="Gene3D" id="3.80.10.10">
    <property type="entry name" value="Ribonuclease Inhibitor"/>
    <property type="match status" value="1"/>
</dbReference>
<dbReference type="InterPro" id="IPR001370">
    <property type="entry name" value="BIR_rpt"/>
</dbReference>
<dbReference type="InterPro" id="IPR032675">
    <property type="entry name" value="LRR_dom_sf"/>
</dbReference>
<dbReference type="InterPro" id="IPR007111">
    <property type="entry name" value="NACHT_NTPase"/>
</dbReference>
<dbReference type="InterPro" id="IPR028789">
    <property type="entry name" value="Naip"/>
</dbReference>
<dbReference type="InterPro" id="IPR053882">
    <property type="entry name" value="Nlrc4-like_WHD"/>
</dbReference>
<dbReference type="InterPro" id="IPR040535">
    <property type="entry name" value="NLRC4_HD"/>
</dbReference>
<dbReference type="InterPro" id="IPR027417">
    <property type="entry name" value="P-loop_NTPase"/>
</dbReference>
<dbReference type="PANTHER" id="PTHR46914">
    <property type="entry name" value="BACULOVIRAL IAP REPEAT-CONTAINING PROTEIN 1"/>
    <property type="match status" value="1"/>
</dbReference>
<dbReference type="PANTHER" id="PTHR46914:SF1">
    <property type="entry name" value="BACULOVIRAL IAP REPEAT-CONTAINING PROTEIN 1"/>
    <property type="match status" value="1"/>
</dbReference>
<dbReference type="Pfam" id="PF00653">
    <property type="entry name" value="BIR"/>
    <property type="match status" value="3"/>
</dbReference>
<dbReference type="Pfam" id="PF05729">
    <property type="entry name" value="NACHT"/>
    <property type="match status" value="1"/>
</dbReference>
<dbReference type="Pfam" id="PF22524">
    <property type="entry name" value="Nlrc4-like_WHD"/>
    <property type="match status" value="1"/>
</dbReference>
<dbReference type="Pfam" id="PF17889">
    <property type="entry name" value="NLRC4_HD"/>
    <property type="match status" value="1"/>
</dbReference>
<dbReference type="SMART" id="SM00238">
    <property type="entry name" value="BIR"/>
    <property type="match status" value="3"/>
</dbReference>
<dbReference type="SUPFAM" id="SSF57924">
    <property type="entry name" value="Inhibitor of apoptosis (IAP) repeat"/>
    <property type="match status" value="3"/>
</dbReference>
<dbReference type="SUPFAM" id="SSF52540">
    <property type="entry name" value="P-loop containing nucleoside triphosphate hydrolases"/>
    <property type="match status" value="1"/>
</dbReference>
<dbReference type="SUPFAM" id="SSF52047">
    <property type="entry name" value="RNI-like"/>
    <property type="match status" value="1"/>
</dbReference>
<dbReference type="PROSITE" id="PS01282">
    <property type="entry name" value="BIR_REPEAT_1"/>
    <property type="match status" value="2"/>
</dbReference>
<dbReference type="PROSITE" id="PS50143">
    <property type="entry name" value="BIR_REPEAT_2"/>
    <property type="match status" value="3"/>
</dbReference>
<dbReference type="PROSITE" id="PS50837">
    <property type="entry name" value="NACHT"/>
    <property type="match status" value="1"/>
</dbReference>